<keyword id="KW-0007">Acetylation</keyword>
<keyword id="KW-1003">Cell membrane</keyword>
<keyword id="KW-0963">Cytoplasm</keyword>
<keyword id="KW-0251">Elongation factor</keyword>
<keyword id="KW-0342">GTP-binding</keyword>
<keyword id="KW-0378">Hydrolase</keyword>
<keyword id="KW-1017">Isopeptide bond</keyword>
<keyword id="KW-0472">Membrane</keyword>
<keyword id="KW-0488">Methylation</keyword>
<keyword id="KW-0547">Nucleotide-binding</keyword>
<keyword id="KW-0539">Nucleus</keyword>
<keyword id="KW-0597">Phosphoprotein</keyword>
<keyword id="KW-0648">Protein biosynthesis</keyword>
<keyword id="KW-1185">Reference proteome</keyword>
<keyword id="KW-0832">Ubl conjugation</keyword>
<feature type="initiator methionine" description="Removed" evidence="3">
    <location>
        <position position="1"/>
    </location>
</feature>
<feature type="chain" id="PRO_0000286044" description="Elongation factor 1-alpha 1">
    <location>
        <begin position="2"/>
        <end position="462"/>
    </location>
</feature>
<feature type="domain" description="tr-type G">
    <location>
        <begin position="5"/>
        <end position="242"/>
    </location>
</feature>
<feature type="region of interest" description="G1" evidence="5">
    <location>
        <begin position="14"/>
        <end position="21"/>
    </location>
</feature>
<feature type="region of interest" description="G2" evidence="5">
    <location>
        <begin position="70"/>
        <end position="74"/>
    </location>
</feature>
<feature type="region of interest" description="G3" evidence="5">
    <location>
        <begin position="91"/>
        <end position="94"/>
    </location>
</feature>
<feature type="region of interest" description="G4" evidence="5">
    <location>
        <begin position="153"/>
        <end position="156"/>
    </location>
</feature>
<feature type="region of interest" description="G5" evidence="5">
    <location>
        <begin position="194"/>
        <end position="196"/>
    </location>
</feature>
<feature type="binding site" evidence="4">
    <location>
        <begin position="14"/>
        <end position="21"/>
    </location>
    <ligand>
        <name>GTP</name>
        <dbReference type="ChEBI" id="CHEBI:37565"/>
    </ligand>
</feature>
<feature type="binding site" evidence="4">
    <location>
        <begin position="153"/>
        <end position="156"/>
    </location>
    <ligand>
        <name>GTP</name>
        <dbReference type="ChEBI" id="CHEBI:37565"/>
    </ligand>
</feature>
<feature type="binding site" evidence="4">
    <location>
        <begin position="194"/>
        <end position="196"/>
    </location>
    <ligand>
        <name>GTP</name>
        <dbReference type="ChEBI" id="CHEBI:37565"/>
    </ligand>
</feature>
<feature type="modified residue" description="N,N,N-trimethylglycine" evidence="3">
    <location>
        <position position="2"/>
    </location>
</feature>
<feature type="modified residue" description="N6,N6,N6-trimethyllysine; alternate" evidence="3">
    <location>
        <position position="36"/>
    </location>
</feature>
<feature type="modified residue" description="N6,N6-dimethyllysine; alternate" evidence="3">
    <location>
        <position position="36"/>
    </location>
</feature>
<feature type="modified residue" description="N6-methyllysine; alternate" evidence="3">
    <location>
        <position position="36"/>
    </location>
</feature>
<feature type="modified residue" description="N6,N6-dimethyllysine" evidence="3">
    <location>
        <position position="55"/>
    </location>
</feature>
<feature type="modified residue" description="N6,N6,N6-trimethyllysine; by EEF1AKMT1" evidence="3">
    <location>
        <position position="79"/>
    </location>
</feature>
<feature type="modified residue" description="N6,N6,N6-trimethyllysine; alternate; by EEF1AKMT3" evidence="3">
    <location>
        <position position="165"/>
    </location>
</feature>
<feature type="modified residue" description="N6,N6-dimethyllysine; alternate; by EEF1AKMT3" evidence="3">
    <location>
        <position position="165"/>
    </location>
</feature>
<feature type="modified residue" description="N6-acetyllysine; alternate" evidence="1">
    <location>
        <position position="165"/>
    </location>
</feature>
<feature type="modified residue" description="N6-methyllysine; alternate; by EEF1AKMT3" evidence="3">
    <location>
        <position position="165"/>
    </location>
</feature>
<feature type="modified residue" description="N6-acetyllysine" evidence="1">
    <location>
        <position position="172"/>
    </location>
</feature>
<feature type="modified residue" description="N6-acetyllysine" evidence="1">
    <location>
        <position position="273"/>
    </location>
</feature>
<feature type="modified residue" description="Phosphoserine; by TGFBR1" evidence="3">
    <location>
        <position position="300"/>
    </location>
</feature>
<feature type="modified residue" description="5-glutamyl glycerylphosphorylethanolamine" evidence="3">
    <location>
        <position position="301"/>
    </location>
</feature>
<feature type="modified residue" description="N6,N6,N6-trimethyllysine; by EEF1AKMT2" evidence="3">
    <location>
        <position position="318"/>
    </location>
</feature>
<feature type="modified residue" description="5-glutamyl glycerylphosphorylethanolamine" evidence="3">
    <location>
        <position position="374"/>
    </location>
</feature>
<feature type="modified residue" description="N6-acetyllysine; alternate" evidence="1">
    <location>
        <position position="392"/>
    </location>
</feature>
<feature type="modified residue" description="N6-succinyllysine; alternate" evidence="1">
    <location>
        <position position="392"/>
    </location>
</feature>
<feature type="modified residue" description="Phosphothreonine; by PASK" evidence="3">
    <location>
        <position position="432"/>
    </location>
</feature>
<feature type="modified residue" description="N6-acetyllysine" evidence="1">
    <location>
        <position position="439"/>
    </location>
</feature>
<feature type="cross-link" description="Glycyl lysine isopeptide (Lys-Gly) (interchain with G-Cter in ubiquitin)" evidence="3">
    <location>
        <position position="385"/>
    </location>
</feature>
<sequence length="462" mass="50125">MGKEKTHINIVVIGHVDSGKSTTTGHLIYKCGGIDKRTIEKFEKEAAEMGKGSFKYAWVLDKLKAERERGITIDISLWKFETSKYYVTIIDAPGHRDFIKNMITGTSQADCAVLIVAAGVGEFEAGISKNGQTREHALLAYTLGVKQLIVGVNKMDSTEPPYSQKRYEEIVKEVSTYIKKIGYNPDTVAFVPISGWNGDNMLEPSANMPWFKGWKVTRKDGNASGTTLLEALDCILPPTRPTDKPLRLPLQDVYKIGGIGTVPVGRVETGVLKPGMVVTFAPVNVTTEVKSVEMHHEALSEALPGDNVGFNVKNVSVKDVRRGNVAGDSKNDPPMEAAGFTAQVIILNHPGQISAGYAPVPDCHTAHIACKFAELKEKIDRRSGKKLEDGPKFLKSGDAAIVDMVPGKPMCVESFSDYPPLGRFAVRDMRQTVAVGVIKAVDKKAAGAGKVTKSAQKAQKAK</sequence>
<organism>
    <name type="scientific">Equus caballus</name>
    <name type="common">Horse</name>
    <dbReference type="NCBI Taxonomy" id="9796"/>
    <lineage>
        <taxon>Eukaryota</taxon>
        <taxon>Metazoa</taxon>
        <taxon>Chordata</taxon>
        <taxon>Craniata</taxon>
        <taxon>Vertebrata</taxon>
        <taxon>Euteleostomi</taxon>
        <taxon>Mammalia</taxon>
        <taxon>Eutheria</taxon>
        <taxon>Laurasiatheria</taxon>
        <taxon>Perissodactyla</taxon>
        <taxon>Equidae</taxon>
        <taxon>Equus</taxon>
    </lineage>
</organism>
<protein>
    <recommendedName>
        <fullName>Elongation factor 1-alpha 1</fullName>
        <shortName>EF-1-alpha-1</shortName>
        <ecNumber evidence="3">3.6.5.-</ecNumber>
    </recommendedName>
    <alternativeName>
        <fullName>Elongation factor Tu</fullName>
        <shortName>EF-Tu</shortName>
    </alternativeName>
    <alternativeName>
        <fullName>Eukaryotic elongation factor 1 A-1</fullName>
        <shortName>eEF1A-1</shortName>
    </alternativeName>
</protein>
<accession>A2Q0Z0</accession>
<proteinExistence type="evidence at transcript level"/>
<name>EF1A1_HORSE</name>
<comment type="function">
    <text evidence="3 4">Translation elongation factor that catalyzes the GTP-dependent binding of aminoacyl-tRNA (aa-tRNA) to the A-site of ribosomes during the elongation phase of protein synthesis. Base pairing between the mRNA codon and the aa-tRNA anticodon promotes GTP hydrolysis, releasing the aa-tRNA from EEF1A1 and allowing its accommodation into the ribosome. The growing protein chain is subsequently transferred from the P-site peptidyl tRNA to the A-site aa-tRNA, extending it by one amino acid through ribosome-catalyzed peptide bond formation. Also plays a role in the positive regulation of IFNG transcription in T-helper 1 cells as part of an IFNG promoter-binding complex with TXK and PARP1 (By similarity). Also plays a role in cytoskeleton organization by promoting actin bundling (By similarity).</text>
</comment>
<comment type="catalytic activity">
    <reaction evidence="3">
        <text>GTP + H2O = GDP + phosphate + H(+)</text>
        <dbReference type="Rhea" id="RHEA:19669"/>
        <dbReference type="ChEBI" id="CHEBI:15377"/>
        <dbReference type="ChEBI" id="CHEBI:15378"/>
        <dbReference type="ChEBI" id="CHEBI:37565"/>
        <dbReference type="ChEBI" id="CHEBI:43474"/>
        <dbReference type="ChEBI" id="CHEBI:58189"/>
    </reaction>
    <physiologicalReaction direction="left-to-right" evidence="3">
        <dbReference type="Rhea" id="RHEA:19670"/>
    </physiologicalReaction>
</comment>
<comment type="subunit">
    <text evidence="2 3">Found in a nuclear export complex with XPO5, EEF1A1, Ran and aminoacylated tRNA. Interacts with PARP1 and TXK. Interacts with KARS1. May interact with ERGIC2. Interacts with IFIT1 (via TPR repeats 4-7) (By similarity). Interacts with DLC1, facilitating distribution to the membrane periphery and ruffles upon growth factor stimulation. Interacts with ZPR1; the interaction occurs in a epidermal growth factor (EGF)-dependent manner (By similarity). Interacts with PPP1R16B (By similarity). Interacts with SPHK1 and SPHK2; both interactions increase SPHK1 and SPHK2 kinase activity (By similarity). Interacts with guanyl-nucleotide exchange factor EEF1B2 (By similarity). Interacts (via middle-region) with HTATIP2 (via N-terminus); the interaction is direct and competes with EEF1A1 binding to guanyl-nucleotide exchange factor EEF1B2, thereby inhibiting GDP for GTP exchange and reactivation of EEF1A1 (By similarity). Interacts with tRNA (By similarity).</text>
</comment>
<comment type="subcellular location">
    <subcellularLocation>
        <location evidence="3">Cytoplasm</location>
    </subcellularLocation>
    <subcellularLocation>
        <location evidence="3">Nucleus</location>
    </subcellularLocation>
    <subcellularLocation>
        <location evidence="3">Nucleus</location>
        <location evidence="3">Nucleolus</location>
    </subcellularLocation>
    <subcellularLocation>
        <location evidence="3">Cell membrane</location>
    </subcellularLocation>
    <text evidence="3">Colocalizes with DLC1 at actin-rich regions in the cell periphery. Translocates together with ZPR1 from the cytoplasm to the nucleus and nucleolus after treatment with mitogens. Localization at the cell membrane depends on EEF1A1 phosphorylation status and the presence of PPP1R16B.</text>
</comment>
<comment type="PTM">
    <text evidence="3">ISGylated.</text>
</comment>
<comment type="PTM">
    <text evidence="3">Phosphorylated by TXK. Phosphorylation by PASK increases translation efficiency. Phosphorylated by ROCK2. Phosphorylation by TGFBR1 inhibits translation elongation.</text>
</comment>
<comment type="PTM">
    <text evidence="3">Trimethylated at Lys-79 by EEF1AKMT1. Methylated at Lys-165 by EEF1AKMT3, methylation by EEF1AKMT3 is dynamic as well as inducible by stress conditions, such as ER-stress, and plays a regulatory role on mRNA translation. Trimethylated at Lys-318 by EEF1AKMT2. Mono-, di-, and trimethylated at Lys-36 by EEF1AKMT4; trimethylated form is predominant. Methylation by EEF1AKMT4 contributes to the fine-tuning of translation rates for a subset of tRNAs. Trimethylated at Gly-2 by METTL13. Mono- and dimethylated at Lys-55 by METTL13; dimethylated form is predominant.</text>
</comment>
<comment type="PTM">
    <text evidence="3">Ubiquitinated at Lys-385 by RNF14 in response to ribosome collisions (ribosome stalling), leading to its degradation by the proteasome and rescue of stalled ribosomes.</text>
</comment>
<comment type="similarity">
    <text evidence="6">Belongs to the TRAFAC class translation factor GTPase superfamily. Classic translation factor GTPase family. EF-Tu/EF-1A subfamily.</text>
</comment>
<gene>
    <name type="primary">EEF1A1</name>
</gene>
<evidence type="ECO:0000250" key="1">
    <source>
        <dbReference type="UniProtKB" id="P10126"/>
    </source>
</evidence>
<evidence type="ECO:0000250" key="2">
    <source>
        <dbReference type="UniProtKB" id="P62630"/>
    </source>
</evidence>
<evidence type="ECO:0000250" key="3">
    <source>
        <dbReference type="UniProtKB" id="P68104"/>
    </source>
</evidence>
<evidence type="ECO:0000250" key="4">
    <source>
        <dbReference type="UniProtKB" id="P68105"/>
    </source>
</evidence>
<evidence type="ECO:0000255" key="5"/>
<evidence type="ECO:0000305" key="6"/>
<dbReference type="EC" id="3.6.5.-" evidence="3"/>
<dbReference type="EMBL" id="AB292108">
    <property type="protein sequence ID" value="BAF46108.1"/>
    <property type="molecule type" value="mRNA"/>
</dbReference>
<dbReference type="RefSeq" id="NP_001075250.1">
    <property type="nucleotide sequence ID" value="NM_001081781.1"/>
</dbReference>
<dbReference type="SMR" id="A2Q0Z0"/>
<dbReference type="STRING" id="9796.ENSECAP00000018148"/>
<dbReference type="PaxDb" id="9796-ENSECAP00000018148"/>
<dbReference type="PeptideAtlas" id="A2Q0Z0"/>
<dbReference type="GeneID" id="100009682"/>
<dbReference type="KEGG" id="ecb:100009682"/>
<dbReference type="CTD" id="1915"/>
<dbReference type="InParanoid" id="A2Q0Z0"/>
<dbReference type="OrthoDB" id="9857985at2759"/>
<dbReference type="Proteomes" id="UP000002281">
    <property type="component" value="Unplaced"/>
</dbReference>
<dbReference type="GO" id="GO:0005737">
    <property type="term" value="C:cytoplasm"/>
    <property type="evidence" value="ECO:0000250"/>
    <property type="project" value="UniProtKB"/>
</dbReference>
<dbReference type="GO" id="GO:0005730">
    <property type="term" value="C:nucleolus"/>
    <property type="evidence" value="ECO:0000250"/>
    <property type="project" value="UniProtKB"/>
</dbReference>
<dbReference type="GO" id="GO:0005634">
    <property type="term" value="C:nucleus"/>
    <property type="evidence" value="ECO:0000250"/>
    <property type="project" value="UniProtKB"/>
</dbReference>
<dbReference type="GO" id="GO:0005886">
    <property type="term" value="C:plasma membrane"/>
    <property type="evidence" value="ECO:0000250"/>
    <property type="project" value="UniProtKB"/>
</dbReference>
<dbReference type="GO" id="GO:0005525">
    <property type="term" value="F:GTP binding"/>
    <property type="evidence" value="ECO:0007669"/>
    <property type="project" value="UniProtKB-KW"/>
</dbReference>
<dbReference type="GO" id="GO:0003924">
    <property type="term" value="F:GTPase activity"/>
    <property type="evidence" value="ECO:0000250"/>
    <property type="project" value="UniProtKB"/>
</dbReference>
<dbReference type="GO" id="GO:0019209">
    <property type="term" value="F:kinase activator activity"/>
    <property type="evidence" value="ECO:0000250"/>
    <property type="project" value="UniProtKB"/>
</dbReference>
<dbReference type="GO" id="GO:0003746">
    <property type="term" value="F:translation elongation factor activity"/>
    <property type="evidence" value="ECO:0000250"/>
    <property type="project" value="UniProtKB"/>
</dbReference>
<dbReference type="GO" id="GO:0071364">
    <property type="term" value="P:cellular response to epidermal growth factor stimulus"/>
    <property type="evidence" value="ECO:0000250"/>
    <property type="project" value="UniProtKB"/>
</dbReference>
<dbReference type="GO" id="GO:0006412">
    <property type="term" value="P:translation"/>
    <property type="evidence" value="ECO:0000318"/>
    <property type="project" value="GO_Central"/>
</dbReference>
<dbReference type="GO" id="GO:0006414">
    <property type="term" value="P:translational elongation"/>
    <property type="evidence" value="ECO:0000250"/>
    <property type="project" value="UniProtKB"/>
</dbReference>
<dbReference type="CDD" id="cd01883">
    <property type="entry name" value="EF1_alpha"/>
    <property type="match status" value="1"/>
</dbReference>
<dbReference type="CDD" id="cd03693">
    <property type="entry name" value="EF1_alpha_II"/>
    <property type="match status" value="1"/>
</dbReference>
<dbReference type="CDD" id="cd03705">
    <property type="entry name" value="EF1_alpha_III"/>
    <property type="match status" value="1"/>
</dbReference>
<dbReference type="FunFam" id="2.40.30.10:FF:000005">
    <property type="entry name" value="Elongation factor 1-alpha"/>
    <property type="match status" value="1"/>
</dbReference>
<dbReference type="FunFam" id="3.40.50.300:FF:000090">
    <property type="entry name" value="Elongation factor 1-alpha"/>
    <property type="match status" value="1"/>
</dbReference>
<dbReference type="FunFam" id="2.40.30.10:FF:000168">
    <property type="entry name" value="Elongation factor 1-alpha 2"/>
    <property type="match status" value="1"/>
</dbReference>
<dbReference type="Gene3D" id="3.40.50.300">
    <property type="entry name" value="P-loop containing nucleotide triphosphate hydrolases"/>
    <property type="match status" value="1"/>
</dbReference>
<dbReference type="Gene3D" id="2.40.30.10">
    <property type="entry name" value="Translation factors"/>
    <property type="match status" value="2"/>
</dbReference>
<dbReference type="HAMAP" id="MF_00118_A">
    <property type="entry name" value="EF_Tu_A"/>
    <property type="match status" value="1"/>
</dbReference>
<dbReference type="InterPro" id="IPR004161">
    <property type="entry name" value="EFTu-like_2"/>
</dbReference>
<dbReference type="InterPro" id="IPR031157">
    <property type="entry name" value="G_TR_CS"/>
</dbReference>
<dbReference type="InterPro" id="IPR054696">
    <property type="entry name" value="GTP-eEF1A_C"/>
</dbReference>
<dbReference type="InterPro" id="IPR027417">
    <property type="entry name" value="P-loop_NTPase"/>
</dbReference>
<dbReference type="InterPro" id="IPR000795">
    <property type="entry name" value="T_Tr_GTP-bd_dom"/>
</dbReference>
<dbReference type="InterPro" id="IPR050100">
    <property type="entry name" value="TRAFAC_GTPase_members"/>
</dbReference>
<dbReference type="InterPro" id="IPR009000">
    <property type="entry name" value="Transl_B-barrel_sf"/>
</dbReference>
<dbReference type="InterPro" id="IPR009001">
    <property type="entry name" value="Transl_elong_EF1A/Init_IF2_C"/>
</dbReference>
<dbReference type="InterPro" id="IPR004539">
    <property type="entry name" value="Transl_elong_EF1A_euk/arc"/>
</dbReference>
<dbReference type="NCBIfam" id="TIGR00483">
    <property type="entry name" value="EF-1_alpha"/>
    <property type="match status" value="1"/>
</dbReference>
<dbReference type="NCBIfam" id="NF008969">
    <property type="entry name" value="PRK12317.1"/>
    <property type="match status" value="1"/>
</dbReference>
<dbReference type="PANTHER" id="PTHR23115">
    <property type="entry name" value="TRANSLATION FACTOR"/>
    <property type="match status" value="1"/>
</dbReference>
<dbReference type="Pfam" id="PF22594">
    <property type="entry name" value="GTP-eEF1A_C"/>
    <property type="match status" value="1"/>
</dbReference>
<dbReference type="Pfam" id="PF00009">
    <property type="entry name" value="GTP_EFTU"/>
    <property type="match status" value="1"/>
</dbReference>
<dbReference type="Pfam" id="PF03144">
    <property type="entry name" value="GTP_EFTU_D2"/>
    <property type="match status" value="1"/>
</dbReference>
<dbReference type="PRINTS" id="PR00315">
    <property type="entry name" value="ELONGATNFCT"/>
</dbReference>
<dbReference type="SUPFAM" id="SSF50465">
    <property type="entry name" value="EF-Tu/eEF-1alpha/eIF2-gamma C-terminal domain"/>
    <property type="match status" value="1"/>
</dbReference>
<dbReference type="SUPFAM" id="SSF52540">
    <property type="entry name" value="P-loop containing nucleoside triphosphate hydrolases"/>
    <property type="match status" value="1"/>
</dbReference>
<dbReference type="SUPFAM" id="SSF50447">
    <property type="entry name" value="Translation proteins"/>
    <property type="match status" value="1"/>
</dbReference>
<dbReference type="PROSITE" id="PS00301">
    <property type="entry name" value="G_TR_1"/>
    <property type="match status" value="1"/>
</dbReference>
<dbReference type="PROSITE" id="PS51722">
    <property type="entry name" value="G_TR_2"/>
    <property type="match status" value="1"/>
</dbReference>
<reference key="1">
    <citation type="submission" date="2007-01" db="EMBL/GenBank/DDBJ databases">
        <title>Cloning of genes expressed in equine tendon.</title>
        <authorList>
            <person name="Hasegawa T."/>
            <person name="Hayashi K."/>
            <person name="Kagawa Y."/>
            <person name="Akiyama Y."/>
            <person name="Suzuki Y."/>
            <person name="Sugano S."/>
            <person name="Ishida N."/>
        </authorList>
    </citation>
    <scope>NUCLEOTIDE SEQUENCE [MRNA]</scope>
    <source>
        <strain>Thoroughbred</strain>
        <tissue>Tendon</tissue>
    </source>
</reference>